<gene>
    <name type="primary">tufA</name>
</gene>
<proteinExistence type="inferred from homology"/>
<accession>Q9MUP0</accession>
<comment type="function">
    <text evidence="2">GTP hydrolase that promotes the GTP-dependent binding of aminoacyl-tRNA to the A-site of ribosomes during protein biosynthesis.</text>
</comment>
<comment type="catalytic activity">
    <reaction evidence="2">
        <text>GTP + H2O = GDP + phosphate + H(+)</text>
        <dbReference type="Rhea" id="RHEA:19669"/>
        <dbReference type="ChEBI" id="CHEBI:15377"/>
        <dbReference type="ChEBI" id="CHEBI:15378"/>
        <dbReference type="ChEBI" id="CHEBI:37565"/>
        <dbReference type="ChEBI" id="CHEBI:43474"/>
        <dbReference type="ChEBI" id="CHEBI:58189"/>
        <dbReference type="EC" id="3.6.5.3"/>
    </reaction>
    <physiologicalReaction direction="left-to-right" evidence="2">
        <dbReference type="Rhea" id="RHEA:19670"/>
    </physiologicalReaction>
</comment>
<comment type="subcellular location">
    <subcellularLocation>
        <location>Plastid</location>
        <location>Chloroplast</location>
    </subcellularLocation>
</comment>
<comment type="similarity">
    <text evidence="3">Belongs to the TRAFAC class translation factor GTPase superfamily. Classic translation factor GTPase family. EF-Tu/EF-1A subfamily.</text>
</comment>
<keyword id="KW-0150">Chloroplast</keyword>
<keyword id="KW-0251">Elongation factor</keyword>
<keyword id="KW-0342">GTP-binding</keyword>
<keyword id="KW-0378">Hydrolase</keyword>
<keyword id="KW-0460">Magnesium</keyword>
<keyword id="KW-0479">Metal-binding</keyword>
<keyword id="KW-0547">Nucleotide-binding</keyword>
<keyword id="KW-0934">Plastid</keyword>
<keyword id="KW-0648">Protein biosynthesis</keyword>
<reference key="1">
    <citation type="journal article" date="2000" name="Nature">
        <title>Ancestral chloroplast genome in Mesostigma viride reveals an early branch of green plant evolution.</title>
        <authorList>
            <person name="Lemieux C."/>
            <person name="Otis C."/>
            <person name="Turmel M."/>
        </authorList>
    </citation>
    <scope>NUCLEOTIDE SEQUENCE [LARGE SCALE GENOMIC DNA]</scope>
    <source>
        <strain>NIES-296 / KY-14 / CCMP 2046</strain>
    </source>
</reference>
<dbReference type="EC" id="3.6.5.3" evidence="2"/>
<dbReference type="EMBL" id="AF166114">
    <property type="protein sequence ID" value="AAF43860.1"/>
    <property type="molecule type" value="Genomic_DNA"/>
</dbReference>
<dbReference type="RefSeq" id="NP_038420.1">
    <property type="nucleotide sequence ID" value="NC_002186.1"/>
</dbReference>
<dbReference type="SMR" id="Q9MUP0"/>
<dbReference type="GeneID" id="800881"/>
<dbReference type="GO" id="GO:0009507">
    <property type="term" value="C:chloroplast"/>
    <property type="evidence" value="ECO:0007669"/>
    <property type="project" value="UniProtKB-SubCell"/>
</dbReference>
<dbReference type="GO" id="GO:0005739">
    <property type="term" value="C:mitochondrion"/>
    <property type="evidence" value="ECO:0007669"/>
    <property type="project" value="TreeGrafter"/>
</dbReference>
<dbReference type="GO" id="GO:0005525">
    <property type="term" value="F:GTP binding"/>
    <property type="evidence" value="ECO:0007669"/>
    <property type="project" value="UniProtKB-UniRule"/>
</dbReference>
<dbReference type="GO" id="GO:0003924">
    <property type="term" value="F:GTPase activity"/>
    <property type="evidence" value="ECO:0007669"/>
    <property type="project" value="InterPro"/>
</dbReference>
<dbReference type="GO" id="GO:0003746">
    <property type="term" value="F:translation elongation factor activity"/>
    <property type="evidence" value="ECO:0007669"/>
    <property type="project" value="UniProtKB-UniRule"/>
</dbReference>
<dbReference type="GO" id="GO:0070125">
    <property type="term" value="P:mitochondrial translational elongation"/>
    <property type="evidence" value="ECO:0007669"/>
    <property type="project" value="TreeGrafter"/>
</dbReference>
<dbReference type="CDD" id="cd01884">
    <property type="entry name" value="EF_Tu"/>
    <property type="match status" value="1"/>
</dbReference>
<dbReference type="CDD" id="cd03697">
    <property type="entry name" value="EFTU_II"/>
    <property type="match status" value="1"/>
</dbReference>
<dbReference type="CDD" id="cd03707">
    <property type="entry name" value="EFTU_III"/>
    <property type="match status" value="1"/>
</dbReference>
<dbReference type="FunFam" id="2.40.30.10:FF:000001">
    <property type="entry name" value="Elongation factor Tu"/>
    <property type="match status" value="1"/>
</dbReference>
<dbReference type="FunFam" id="2.40.30.10:FF:000046">
    <property type="entry name" value="Elongation factor Tu"/>
    <property type="match status" value="1"/>
</dbReference>
<dbReference type="FunFam" id="3.40.50.300:FF:000003">
    <property type="entry name" value="Elongation factor Tu"/>
    <property type="match status" value="1"/>
</dbReference>
<dbReference type="Gene3D" id="3.40.50.300">
    <property type="entry name" value="P-loop containing nucleotide triphosphate hydrolases"/>
    <property type="match status" value="1"/>
</dbReference>
<dbReference type="Gene3D" id="2.40.30.10">
    <property type="entry name" value="Translation factors"/>
    <property type="match status" value="2"/>
</dbReference>
<dbReference type="HAMAP" id="MF_00118_B">
    <property type="entry name" value="EF_Tu_B"/>
    <property type="match status" value="1"/>
</dbReference>
<dbReference type="InterPro" id="IPR041709">
    <property type="entry name" value="EF-Tu_GTP-bd"/>
</dbReference>
<dbReference type="InterPro" id="IPR050055">
    <property type="entry name" value="EF-Tu_GTPase"/>
</dbReference>
<dbReference type="InterPro" id="IPR004161">
    <property type="entry name" value="EFTu-like_2"/>
</dbReference>
<dbReference type="InterPro" id="IPR033720">
    <property type="entry name" value="EFTU_2"/>
</dbReference>
<dbReference type="InterPro" id="IPR031157">
    <property type="entry name" value="G_TR_CS"/>
</dbReference>
<dbReference type="InterPro" id="IPR027417">
    <property type="entry name" value="P-loop_NTPase"/>
</dbReference>
<dbReference type="InterPro" id="IPR005225">
    <property type="entry name" value="Small_GTP-bd"/>
</dbReference>
<dbReference type="InterPro" id="IPR000795">
    <property type="entry name" value="T_Tr_GTP-bd_dom"/>
</dbReference>
<dbReference type="InterPro" id="IPR009000">
    <property type="entry name" value="Transl_B-barrel_sf"/>
</dbReference>
<dbReference type="InterPro" id="IPR009001">
    <property type="entry name" value="Transl_elong_EF1A/Init_IF2_C"/>
</dbReference>
<dbReference type="InterPro" id="IPR004541">
    <property type="entry name" value="Transl_elong_EFTu/EF1A_bac/org"/>
</dbReference>
<dbReference type="InterPro" id="IPR004160">
    <property type="entry name" value="Transl_elong_EFTu/EF1A_C"/>
</dbReference>
<dbReference type="NCBIfam" id="TIGR00485">
    <property type="entry name" value="EF-Tu"/>
    <property type="match status" value="1"/>
</dbReference>
<dbReference type="NCBIfam" id="NF000766">
    <property type="entry name" value="PRK00049.1"/>
    <property type="match status" value="1"/>
</dbReference>
<dbReference type="NCBIfam" id="NF009372">
    <property type="entry name" value="PRK12735.1"/>
    <property type="match status" value="1"/>
</dbReference>
<dbReference type="NCBIfam" id="NF009373">
    <property type="entry name" value="PRK12736.1"/>
    <property type="match status" value="1"/>
</dbReference>
<dbReference type="NCBIfam" id="TIGR00231">
    <property type="entry name" value="small_GTP"/>
    <property type="match status" value="1"/>
</dbReference>
<dbReference type="PANTHER" id="PTHR43721:SF5">
    <property type="entry name" value="ELONGATION FACTOR TU, CHLOROPLASTIC"/>
    <property type="match status" value="1"/>
</dbReference>
<dbReference type="PANTHER" id="PTHR43721">
    <property type="entry name" value="ELONGATION FACTOR TU-RELATED"/>
    <property type="match status" value="1"/>
</dbReference>
<dbReference type="Pfam" id="PF00009">
    <property type="entry name" value="GTP_EFTU"/>
    <property type="match status" value="1"/>
</dbReference>
<dbReference type="Pfam" id="PF03144">
    <property type="entry name" value="GTP_EFTU_D2"/>
    <property type="match status" value="1"/>
</dbReference>
<dbReference type="Pfam" id="PF03143">
    <property type="entry name" value="GTP_EFTU_D3"/>
    <property type="match status" value="1"/>
</dbReference>
<dbReference type="PRINTS" id="PR00315">
    <property type="entry name" value="ELONGATNFCT"/>
</dbReference>
<dbReference type="SUPFAM" id="SSF50465">
    <property type="entry name" value="EF-Tu/eEF-1alpha/eIF2-gamma C-terminal domain"/>
    <property type="match status" value="1"/>
</dbReference>
<dbReference type="SUPFAM" id="SSF52540">
    <property type="entry name" value="P-loop containing nucleoside triphosphate hydrolases"/>
    <property type="match status" value="1"/>
</dbReference>
<dbReference type="SUPFAM" id="SSF50447">
    <property type="entry name" value="Translation proteins"/>
    <property type="match status" value="1"/>
</dbReference>
<dbReference type="PROSITE" id="PS00301">
    <property type="entry name" value="G_TR_1"/>
    <property type="match status" value="1"/>
</dbReference>
<dbReference type="PROSITE" id="PS51722">
    <property type="entry name" value="G_TR_2"/>
    <property type="match status" value="1"/>
</dbReference>
<name>EFTU_MESVI</name>
<sequence length="410" mass="44854">MAREKFERKKPHINIGTIGHVDHGKTTLTAAITMALAVGTGKSGKRYDEIDAAPEEKARGITINTAHVEYETETRHYAHVDCPGHADYVKNMITGAAQMDGAILVVSGADGPMPQTKEHILLAKQVGVPNMVVFLNKEDQVDDPELLELVELEVRETLNSYDFPGDEIPVVAGSALMALEALTQDSKLARGSNPWVDKIYALMDQVDKYIPTPQRDTDKPFLMAIEDVFSITGRGTVATGRVERGKVVVGENVDIVGLANIPQNTTVTGLEMFQKTLEESVAGDNVGVLLRGIQKDQVERGMVLAKPNTIKPHIRFESEVYVLAKEEGGRHTPFFPGYRPQFYVRTTDVTGKIDSFKADDGSDTQMVMPGDRVKMVVSLIQPIAIEKGMRFAIREGGRTVGAGIVSEILE</sequence>
<feature type="chain" id="PRO_0000091465" description="Elongation factor Tu, chloroplastic">
    <location>
        <begin position="1"/>
        <end position="410"/>
    </location>
</feature>
<feature type="domain" description="tr-type G">
    <location>
        <begin position="10"/>
        <end position="214"/>
    </location>
</feature>
<feature type="region of interest" description="G1" evidence="1">
    <location>
        <begin position="19"/>
        <end position="26"/>
    </location>
</feature>
<feature type="region of interest" description="G2" evidence="1">
    <location>
        <begin position="60"/>
        <end position="64"/>
    </location>
</feature>
<feature type="region of interest" description="G3" evidence="1">
    <location>
        <begin position="81"/>
        <end position="84"/>
    </location>
</feature>
<feature type="region of interest" description="G4" evidence="1">
    <location>
        <begin position="136"/>
        <end position="139"/>
    </location>
</feature>
<feature type="region of interest" description="G5" evidence="1">
    <location>
        <begin position="174"/>
        <end position="176"/>
    </location>
</feature>
<feature type="binding site" evidence="1">
    <location>
        <begin position="19"/>
        <end position="26"/>
    </location>
    <ligand>
        <name>GTP</name>
        <dbReference type="ChEBI" id="CHEBI:37565"/>
    </ligand>
</feature>
<feature type="binding site" evidence="2">
    <location>
        <position position="26"/>
    </location>
    <ligand>
        <name>Mg(2+)</name>
        <dbReference type="ChEBI" id="CHEBI:18420"/>
    </ligand>
</feature>
<feature type="binding site" evidence="1">
    <location>
        <begin position="81"/>
        <end position="85"/>
    </location>
    <ligand>
        <name>GTP</name>
        <dbReference type="ChEBI" id="CHEBI:37565"/>
    </ligand>
</feature>
<feature type="binding site" evidence="1">
    <location>
        <begin position="136"/>
        <end position="139"/>
    </location>
    <ligand>
        <name>GTP</name>
        <dbReference type="ChEBI" id="CHEBI:37565"/>
    </ligand>
</feature>
<geneLocation type="chloroplast"/>
<evidence type="ECO:0000250" key="1"/>
<evidence type="ECO:0000255" key="2">
    <source>
        <dbReference type="HAMAP-Rule" id="MF_00118"/>
    </source>
</evidence>
<evidence type="ECO:0000305" key="3"/>
<protein>
    <recommendedName>
        <fullName>Elongation factor Tu, chloroplastic</fullName>
        <shortName>EF-Tu</shortName>
        <ecNumber evidence="2">3.6.5.3</ecNumber>
    </recommendedName>
</protein>
<organism>
    <name type="scientific">Mesostigma viride</name>
    <name type="common">Green alga</name>
    <dbReference type="NCBI Taxonomy" id="41882"/>
    <lineage>
        <taxon>Eukaryota</taxon>
        <taxon>Viridiplantae</taxon>
        <taxon>Streptophyta</taxon>
        <taxon>Mesostigmatophyceae</taxon>
        <taxon>Mesostigmatales</taxon>
        <taxon>Mesostigmataceae</taxon>
        <taxon>Mesostigma</taxon>
    </lineage>
</organism>